<proteinExistence type="inferred from homology"/>
<accession>Q11CP4</accession>
<name>RL27_CHESB</name>
<evidence type="ECO:0000255" key="1">
    <source>
        <dbReference type="HAMAP-Rule" id="MF_00539"/>
    </source>
</evidence>
<evidence type="ECO:0000256" key="2">
    <source>
        <dbReference type="SAM" id="MobiDB-lite"/>
    </source>
</evidence>
<evidence type="ECO:0000305" key="3"/>
<comment type="similarity">
    <text evidence="1">Belongs to the bacterial ribosomal protein bL27 family.</text>
</comment>
<dbReference type="EMBL" id="CP000390">
    <property type="protein sequence ID" value="ABG64831.1"/>
    <property type="molecule type" value="Genomic_DNA"/>
</dbReference>
<dbReference type="SMR" id="Q11CP4"/>
<dbReference type="STRING" id="266779.Meso_3460"/>
<dbReference type="KEGG" id="mes:Meso_3460"/>
<dbReference type="eggNOG" id="COG0211">
    <property type="taxonomic scope" value="Bacteria"/>
</dbReference>
<dbReference type="HOGENOM" id="CLU_095424_4_1_5"/>
<dbReference type="OrthoDB" id="9803474at2"/>
<dbReference type="GO" id="GO:0022625">
    <property type="term" value="C:cytosolic large ribosomal subunit"/>
    <property type="evidence" value="ECO:0007669"/>
    <property type="project" value="TreeGrafter"/>
</dbReference>
<dbReference type="GO" id="GO:0003735">
    <property type="term" value="F:structural constituent of ribosome"/>
    <property type="evidence" value="ECO:0007669"/>
    <property type="project" value="InterPro"/>
</dbReference>
<dbReference type="GO" id="GO:0006412">
    <property type="term" value="P:translation"/>
    <property type="evidence" value="ECO:0007669"/>
    <property type="project" value="UniProtKB-UniRule"/>
</dbReference>
<dbReference type="FunFam" id="2.40.50.100:FF:000020">
    <property type="entry name" value="50S ribosomal protein L27"/>
    <property type="match status" value="1"/>
</dbReference>
<dbReference type="Gene3D" id="2.40.50.100">
    <property type="match status" value="1"/>
</dbReference>
<dbReference type="HAMAP" id="MF_00539">
    <property type="entry name" value="Ribosomal_bL27"/>
    <property type="match status" value="1"/>
</dbReference>
<dbReference type="InterPro" id="IPR001684">
    <property type="entry name" value="Ribosomal_bL27"/>
</dbReference>
<dbReference type="InterPro" id="IPR018261">
    <property type="entry name" value="Ribosomal_bL27_CS"/>
</dbReference>
<dbReference type="NCBIfam" id="TIGR00062">
    <property type="entry name" value="L27"/>
    <property type="match status" value="1"/>
</dbReference>
<dbReference type="PANTHER" id="PTHR15893:SF0">
    <property type="entry name" value="LARGE RIBOSOMAL SUBUNIT PROTEIN BL27M"/>
    <property type="match status" value="1"/>
</dbReference>
<dbReference type="PANTHER" id="PTHR15893">
    <property type="entry name" value="RIBOSOMAL PROTEIN L27"/>
    <property type="match status" value="1"/>
</dbReference>
<dbReference type="Pfam" id="PF01016">
    <property type="entry name" value="Ribosomal_L27"/>
    <property type="match status" value="1"/>
</dbReference>
<dbReference type="PRINTS" id="PR00063">
    <property type="entry name" value="RIBOSOMALL27"/>
</dbReference>
<dbReference type="SUPFAM" id="SSF110324">
    <property type="entry name" value="Ribosomal L27 protein-like"/>
    <property type="match status" value="1"/>
</dbReference>
<dbReference type="PROSITE" id="PS00831">
    <property type="entry name" value="RIBOSOMAL_L27"/>
    <property type="match status" value="1"/>
</dbReference>
<reference key="1">
    <citation type="submission" date="2006-06" db="EMBL/GenBank/DDBJ databases">
        <title>Complete sequence of chromosome of Mesorhizobium sp. BNC1.</title>
        <authorList>
            <consortium name="US DOE Joint Genome Institute"/>
            <person name="Copeland A."/>
            <person name="Lucas S."/>
            <person name="Lapidus A."/>
            <person name="Barry K."/>
            <person name="Detter J.C."/>
            <person name="Glavina del Rio T."/>
            <person name="Hammon N."/>
            <person name="Israni S."/>
            <person name="Dalin E."/>
            <person name="Tice H."/>
            <person name="Pitluck S."/>
            <person name="Chertkov O."/>
            <person name="Brettin T."/>
            <person name="Bruce D."/>
            <person name="Han C."/>
            <person name="Tapia R."/>
            <person name="Gilna P."/>
            <person name="Schmutz J."/>
            <person name="Larimer F."/>
            <person name="Land M."/>
            <person name="Hauser L."/>
            <person name="Kyrpides N."/>
            <person name="Mikhailova N."/>
            <person name="Richardson P."/>
        </authorList>
    </citation>
    <scope>NUCLEOTIDE SEQUENCE [LARGE SCALE GENOMIC DNA]</scope>
    <source>
        <strain>BNC1</strain>
    </source>
</reference>
<keyword id="KW-0687">Ribonucleoprotein</keyword>
<keyword id="KW-0689">Ribosomal protein</keyword>
<organism>
    <name type="scientific">Chelativorans sp. (strain BNC1)</name>
    <dbReference type="NCBI Taxonomy" id="266779"/>
    <lineage>
        <taxon>Bacteria</taxon>
        <taxon>Pseudomonadati</taxon>
        <taxon>Pseudomonadota</taxon>
        <taxon>Alphaproteobacteria</taxon>
        <taxon>Hyphomicrobiales</taxon>
        <taxon>Phyllobacteriaceae</taxon>
        <taxon>Chelativorans</taxon>
    </lineage>
</organism>
<protein>
    <recommendedName>
        <fullName evidence="1">Large ribosomal subunit protein bL27</fullName>
    </recommendedName>
    <alternativeName>
        <fullName evidence="3">50S ribosomal protein L27</fullName>
    </alternativeName>
</protein>
<sequence>MAHKKAGGSSRNGRDSESKRLGVKKFGGEAVLAGNIIIRQRGTKWHPGANVGMGKDHTLFALQAGAVSFAKKANGRTYVSVNPILEAAE</sequence>
<feature type="chain" id="PRO_1000017513" description="Large ribosomal subunit protein bL27">
    <location>
        <begin position="1"/>
        <end position="89"/>
    </location>
</feature>
<feature type="region of interest" description="Disordered" evidence="2">
    <location>
        <begin position="1"/>
        <end position="21"/>
    </location>
</feature>
<gene>
    <name evidence="1" type="primary">rpmA</name>
    <name type="ordered locus">Meso_3460</name>
</gene>